<name>SYR_YERE8</name>
<keyword id="KW-0030">Aminoacyl-tRNA synthetase</keyword>
<keyword id="KW-0067">ATP-binding</keyword>
<keyword id="KW-0963">Cytoplasm</keyword>
<keyword id="KW-0436">Ligase</keyword>
<keyword id="KW-0547">Nucleotide-binding</keyword>
<keyword id="KW-0648">Protein biosynthesis</keyword>
<protein>
    <recommendedName>
        <fullName evidence="1">Arginine--tRNA ligase</fullName>
        <ecNumber evidence="1">6.1.1.19</ecNumber>
    </recommendedName>
    <alternativeName>
        <fullName evidence="1">Arginyl-tRNA synthetase</fullName>
        <shortName evidence="1">ArgRS</shortName>
    </alternativeName>
</protein>
<gene>
    <name evidence="1" type="primary">argS</name>
    <name type="ordered locus">YE2406</name>
</gene>
<reference key="1">
    <citation type="journal article" date="2006" name="PLoS Genet.">
        <title>The complete genome sequence and comparative genome analysis of the high pathogenicity Yersinia enterocolitica strain 8081.</title>
        <authorList>
            <person name="Thomson N.R."/>
            <person name="Howard S."/>
            <person name="Wren B.W."/>
            <person name="Holden M.T.G."/>
            <person name="Crossman L."/>
            <person name="Challis G.L."/>
            <person name="Churcher C."/>
            <person name="Mungall K."/>
            <person name="Brooks K."/>
            <person name="Chillingworth T."/>
            <person name="Feltwell T."/>
            <person name="Abdellah Z."/>
            <person name="Hauser H."/>
            <person name="Jagels K."/>
            <person name="Maddison M."/>
            <person name="Moule S."/>
            <person name="Sanders M."/>
            <person name="Whitehead S."/>
            <person name="Quail M.A."/>
            <person name="Dougan G."/>
            <person name="Parkhill J."/>
            <person name="Prentice M.B."/>
        </authorList>
    </citation>
    <scope>NUCLEOTIDE SEQUENCE [LARGE SCALE GENOMIC DNA]</scope>
    <source>
        <strain>NCTC 13174 / 8081</strain>
    </source>
</reference>
<organism>
    <name type="scientific">Yersinia enterocolitica serotype O:8 / biotype 1B (strain NCTC 13174 / 8081)</name>
    <dbReference type="NCBI Taxonomy" id="393305"/>
    <lineage>
        <taxon>Bacteria</taxon>
        <taxon>Pseudomonadati</taxon>
        <taxon>Pseudomonadota</taxon>
        <taxon>Gammaproteobacteria</taxon>
        <taxon>Enterobacterales</taxon>
        <taxon>Yersiniaceae</taxon>
        <taxon>Yersinia</taxon>
    </lineage>
</organism>
<dbReference type="EC" id="6.1.1.19" evidence="1"/>
<dbReference type="EMBL" id="AM286415">
    <property type="protein sequence ID" value="CAL12457.1"/>
    <property type="molecule type" value="Genomic_DNA"/>
</dbReference>
<dbReference type="RefSeq" id="WP_011816530.1">
    <property type="nucleotide sequence ID" value="NC_008800.1"/>
</dbReference>
<dbReference type="RefSeq" id="YP_001006624.1">
    <property type="nucleotide sequence ID" value="NC_008800.1"/>
</dbReference>
<dbReference type="SMR" id="A1JRM9"/>
<dbReference type="KEGG" id="yen:YE2406"/>
<dbReference type="PATRIC" id="fig|393305.7.peg.2560"/>
<dbReference type="eggNOG" id="COG0018">
    <property type="taxonomic scope" value="Bacteria"/>
</dbReference>
<dbReference type="HOGENOM" id="CLU_006406_5_1_6"/>
<dbReference type="OrthoDB" id="9803211at2"/>
<dbReference type="Proteomes" id="UP000000642">
    <property type="component" value="Chromosome"/>
</dbReference>
<dbReference type="GO" id="GO:0005737">
    <property type="term" value="C:cytoplasm"/>
    <property type="evidence" value="ECO:0007669"/>
    <property type="project" value="UniProtKB-SubCell"/>
</dbReference>
<dbReference type="GO" id="GO:0004814">
    <property type="term" value="F:arginine-tRNA ligase activity"/>
    <property type="evidence" value="ECO:0007669"/>
    <property type="project" value="UniProtKB-UniRule"/>
</dbReference>
<dbReference type="GO" id="GO:0005524">
    <property type="term" value="F:ATP binding"/>
    <property type="evidence" value="ECO:0007669"/>
    <property type="project" value="UniProtKB-UniRule"/>
</dbReference>
<dbReference type="GO" id="GO:0006420">
    <property type="term" value="P:arginyl-tRNA aminoacylation"/>
    <property type="evidence" value="ECO:0007669"/>
    <property type="project" value="UniProtKB-UniRule"/>
</dbReference>
<dbReference type="CDD" id="cd07956">
    <property type="entry name" value="Anticodon_Ia_Arg"/>
    <property type="match status" value="1"/>
</dbReference>
<dbReference type="CDD" id="cd00671">
    <property type="entry name" value="ArgRS_core"/>
    <property type="match status" value="1"/>
</dbReference>
<dbReference type="FunFam" id="1.10.730.10:FF:000001">
    <property type="entry name" value="Arginine--tRNA ligase"/>
    <property type="match status" value="1"/>
</dbReference>
<dbReference type="FunFam" id="3.30.1360.70:FF:000001">
    <property type="entry name" value="Arginine--tRNA ligase"/>
    <property type="match status" value="1"/>
</dbReference>
<dbReference type="FunFam" id="3.40.50.620:FF:000030">
    <property type="entry name" value="Arginine--tRNA ligase"/>
    <property type="match status" value="1"/>
</dbReference>
<dbReference type="Gene3D" id="3.30.1360.70">
    <property type="entry name" value="Arginyl tRNA synthetase N-terminal domain"/>
    <property type="match status" value="1"/>
</dbReference>
<dbReference type="Gene3D" id="3.40.50.620">
    <property type="entry name" value="HUPs"/>
    <property type="match status" value="1"/>
</dbReference>
<dbReference type="Gene3D" id="1.10.730.10">
    <property type="entry name" value="Isoleucyl-tRNA Synthetase, Domain 1"/>
    <property type="match status" value="1"/>
</dbReference>
<dbReference type="HAMAP" id="MF_00123">
    <property type="entry name" value="Arg_tRNA_synth"/>
    <property type="match status" value="1"/>
</dbReference>
<dbReference type="InterPro" id="IPR001412">
    <property type="entry name" value="aa-tRNA-synth_I_CS"/>
</dbReference>
<dbReference type="InterPro" id="IPR001278">
    <property type="entry name" value="Arg-tRNA-ligase"/>
</dbReference>
<dbReference type="InterPro" id="IPR005148">
    <property type="entry name" value="Arg-tRNA-synth_N"/>
</dbReference>
<dbReference type="InterPro" id="IPR036695">
    <property type="entry name" value="Arg-tRNA-synth_N_sf"/>
</dbReference>
<dbReference type="InterPro" id="IPR035684">
    <property type="entry name" value="ArgRS_core"/>
</dbReference>
<dbReference type="InterPro" id="IPR008909">
    <property type="entry name" value="DALR_anticod-bd"/>
</dbReference>
<dbReference type="InterPro" id="IPR014729">
    <property type="entry name" value="Rossmann-like_a/b/a_fold"/>
</dbReference>
<dbReference type="InterPro" id="IPR009080">
    <property type="entry name" value="tRNAsynth_Ia_anticodon-bd"/>
</dbReference>
<dbReference type="NCBIfam" id="TIGR00456">
    <property type="entry name" value="argS"/>
    <property type="match status" value="1"/>
</dbReference>
<dbReference type="PANTHER" id="PTHR11956:SF5">
    <property type="entry name" value="ARGININE--TRNA LIGASE, CYTOPLASMIC"/>
    <property type="match status" value="1"/>
</dbReference>
<dbReference type="PANTHER" id="PTHR11956">
    <property type="entry name" value="ARGINYL-TRNA SYNTHETASE"/>
    <property type="match status" value="1"/>
</dbReference>
<dbReference type="Pfam" id="PF03485">
    <property type="entry name" value="Arg_tRNA_synt_N"/>
    <property type="match status" value="1"/>
</dbReference>
<dbReference type="Pfam" id="PF05746">
    <property type="entry name" value="DALR_1"/>
    <property type="match status" value="1"/>
</dbReference>
<dbReference type="Pfam" id="PF00750">
    <property type="entry name" value="tRNA-synt_1d"/>
    <property type="match status" value="1"/>
</dbReference>
<dbReference type="PRINTS" id="PR01038">
    <property type="entry name" value="TRNASYNTHARG"/>
</dbReference>
<dbReference type="SMART" id="SM01016">
    <property type="entry name" value="Arg_tRNA_synt_N"/>
    <property type="match status" value="1"/>
</dbReference>
<dbReference type="SMART" id="SM00836">
    <property type="entry name" value="DALR_1"/>
    <property type="match status" value="1"/>
</dbReference>
<dbReference type="SUPFAM" id="SSF47323">
    <property type="entry name" value="Anticodon-binding domain of a subclass of class I aminoacyl-tRNA synthetases"/>
    <property type="match status" value="1"/>
</dbReference>
<dbReference type="SUPFAM" id="SSF55190">
    <property type="entry name" value="Arginyl-tRNA synthetase (ArgRS), N-terminal 'additional' domain"/>
    <property type="match status" value="1"/>
</dbReference>
<dbReference type="SUPFAM" id="SSF52374">
    <property type="entry name" value="Nucleotidylyl transferase"/>
    <property type="match status" value="1"/>
</dbReference>
<dbReference type="PROSITE" id="PS00178">
    <property type="entry name" value="AA_TRNA_LIGASE_I"/>
    <property type="match status" value="1"/>
</dbReference>
<evidence type="ECO:0000255" key="1">
    <source>
        <dbReference type="HAMAP-Rule" id="MF_00123"/>
    </source>
</evidence>
<sequence>MNIQALLSDKVSQALIAAGAPAGSEPQVRQSAKAQFGDYQANGVMAIAKKLGMQPRQLAEKVIELLDLDGIASKVEIAGPGFINIFLDRQWVASKVEEALKAPKLGVQPVEPQTIVVDYSAPNVAKQMHVGHLRSTIIGDAAVRTLEFLGHNVIRANHVGDWGTQFGMLIAYLEKMQNENASDMGLSDLELFYQQAKKTYDEDEEFAKRARAYVVKLQSGDEYCRQMWRKLVDITMAQNQIAYDRLNVTLTKDDVMGESLYNTMLPEIVADLKAKGLAVESEGATVVYLDEYKNKDGEPMGVIIQKKDGGYLYTTTDIACAKYRYETLGADRVLYYIDSRQHQHLMQAWTIVRKAGYVPESVPLEHHMFGMMLGKDGKPFKTRSGGTVKLSDLLDEAIERAGKLIAEKNPDMPADELKQVVEAVGIGAVKYADLSKSRTTDYIFDWDNMLALDGNTAPYMQYAYTRVVSVFKRAGIDESNLTLPLVITEDREAALATRLLQFEEIITTVAREGTPHVMCSYLYDLAGLFSSFYEHCQILNADSEESRQSRLKLAMLTAKTLKQGLDTLGIQTVERM</sequence>
<proteinExistence type="inferred from homology"/>
<feature type="chain" id="PRO_1000018145" description="Arginine--tRNA ligase">
    <location>
        <begin position="1"/>
        <end position="576"/>
    </location>
</feature>
<feature type="short sequence motif" description="'HIGH' region">
    <location>
        <begin position="122"/>
        <end position="132"/>
    </location>
</feature>
<comment type="catalytic activity">
    <reaction evidence="1">
        <text>tRNA(Arg) + L-arginine + ATP = L-arginyl-tRNA(Arg) + AMP + diphosphate</text>
        <dbReference type="Rhea" id="RHEA:20301"/>
        <dbReference type="Rhea" id="RHEA-COMP:9658"/>
        <dbReference type="Rhea" id="RHEA-COMP:9673"/>
        <dbReference type="ChEBI" id="CHEBI:30616"/>
        <dbReference type="ChEBI" id="CHEBI:32682"/>
        <dbReference type="ChEBI" id="CHEBI:33019"/>
        <dbReference type="ChEBI" id="CHEBI:78442"/>
        <dbReference type="ChEBI" id="CHEBI:78513"/>
        <dbReference type="ChEBI" id="CHEBI:456215"/>
        <dbReference type="EC" id="6.1.1.19"/>
    </reaction>
</comment>
<comment type="subunit">
    <text evidence="1">Monomer.</text>
</comment>
<comment type="subcellular location">
    <subcellularLocation>
        <location evidence="1">Cytoplasm</location>
    </subcellularLocation>
</comment>
<comment type="similarity">
    <text evidence="1">Belongs to the class-I aminoacyl-tRNA synthetase family.</text>
</comment>
<accession>A1JRM9</accession>